<keyword id="KW-0028">Amino-acid biosynthesis</keyword>
<keyword id="KW-0032">Aminotransferase</keyword>
<keyword id="KW-0963">Cytoplasm</keyword>
<keyword id="KW-0663">Pyridoxal phosphate</keyword>
<keyword id="KW-0664">Pyridoxine biosynthesis</keyword>
<keyword id="KW-1185">Reference proteome</keyword>
<keyword id="KW-0718">Serine biosynthesis</keyword>
<keyword id="KW-0808">Transferase</keyword>
<gene>
    <name evidence="1" type="primary">serC</name>
    <name type="ordered locus">PBPRA2455</name>
</gene>
<accession>Q6LPD9</accession>
<organism>
    <name type="scientific">Photobacterium profundum (strain SS9)</name>
    <dbReference type="NCBI Taxonomy" id="298386"/>
    <lineage>
        <taxon>Bacteria</taxon>
        <taxon>Pseudomonadati</taxon>
        <taxon>Pseudomonadota</taxon>
        <taxon>Gammaproteobacteria</taxon>
        <taxon>Vibrionales</taxon>
        <taxon>Vibrionaceae</taxon>
        <taxon>Photobacterium</taxon>
    </lineage>
</organism>
<comment type="function">
    <text evidence="1">Catalyzes the reversible conversion of 3-phosphohydroxypyruvate to phosphoserine and of 3-hydroxy-2-oxo-4-phosphonooxybutanoate to phosphohydroxythreonine.</text>
</comment>
<comment type="catalytic activity">
    <reaction evidence="1">
        <text>O-phospho-L-serine + 2-oxoglutarate = 3-phosphooxypyruvate + L-glutamate</text>
        <dbReference type="Rhea" id="RHEA:14329"/>
        <dbReference type="ChEBI" id="CHEBI:16810"/>
        <dbReference type="ChEBI" id="CHEBI:18110"/>
        <dbReference type="ChEBI" id="CHEBI:29985"/>
        <dbReference type="ChEBI" id="CHEBI:57524"/>
        <dbReference type="EC" id="2.6.1.52"/>
    </reaction>
</comment>
<comment type="catalytic activity">
    <reaction evidence="1">
        <text>4-(phosphooxy)-L-threonine + 2-oxoglutarate = (R)-3-hydroxy-2-oxo-4-phosphooxybutanoate + L-glutamate</text>
        <dbReference type="Rhea" id="RHEA:16573"/>
        <dbReference type="ChEBI" id="CHEBI:16810"/>
        <dbReference type="ChEBI" id="CHEBI:29985"/>
        <dbReference type="ChEBI" id="CHEBI:58452"/>
        <dbReference type="ChEBI" id="CHEBI:58538"/>
        <dbReference type="EC" id="2.6.1.52"/>
    </reaction>
</comment>
<comment type="cofactor">
    <cofactor evidence="1">
        <name>pyridoxal 5'-phosphate</name>
        <dbReference type="ChEBI" id="CHEBI:597326"/>
    </cofactor>
    <text evidence="1">Binds 1 pyridoxal phosphate per subunit.</text>
</comment>
<comment type="pathway">
    <text evidence="1">Amino-acid biosynthesis; L-serine biosynthesis; L-serine from 3-phospho-D-glycerate: step 2/3.</text>
</comment>
<comment type="pathway">
    <text evidence="1">Cofactor biosynthesis; pyridoxine 5'-phosphate biosynthesis; pyridoxine 5'-phosphate from D-erythrose 4-phosphate: step 3/5.</text>
</comment>
<comment type="subunit">
    <text evidence="1">Homodimer.</text>
</comment>
<comment type="subcellular location">
    <subcellularLocation>
        <location evidence="1">Cytoplasm</location>
    </subcellularLocation>
</comment>
<comment type="similarity">
    <text evidence="1">Belongs to the class-V pyridoxal-phosphate-dependent aminotransferase family. SerC subfamily.</text>
</comment>
<sequence length="360" mass="39938">MEKVYNFCAGPAMIPAEVLKKVQEELVNWNGLGTSVMEISHRSKEFLAVAKQSEKDLRELLSIPSNYHVLFCHGGARGQFAAVPMNLLGDANTADYMDGGYWAHSAIAEAKKYCSPNAVDITCEREGKKAILPAREWSLSDDAAFVHFCPNETIDGIEIRDLPETDKPIVADLSSTILSRPIDVSKYGVIYAGAQKNIGPAGLTIVIVRDDLLGKAKQEIPSIFDYTVLVDKESMFNTPPTFAWYLAGEVFKWLKELGGLEAMKQRNDAKAELLYNFIDGSNFYNNDVHVDNRSFMNAPFQLKKPELDSKFLEQADAAGLKALKGHRVVGGMRASIYNAMPIEGVQALVDFMRQFEQKNA</sequence>
<dbReference type="EC" id="2.6.1.52" evidence="1"/>
<dbReference type="EMBL" id="CR378671">
    <property type="protein sequence ID" value="CAG20837.1"/>
    <property type="molecule type" value="Genomic_DNA"/>
</dbReference>
<dbReference type="RefSeq" id="WP_011219120.1">
    <property type="nucleotide sequence ID" value="NC_006370.1"/>
</dbReference>
<dbReference type="SMR" id="Q6LPD9"/>
<dbReference type="STRING" id="298386.PBPRA2455"/>
<dbReference type="KEGG" id="ppr:PBPRA2455"/>
<dbReference type="eggNOG" id="COG1932">
    <property type="taxonomic scope" value="Bacteria"/>
</dbReference>
<dbReference type="HOGENOM" id="CLU_034866_0_2_6"/>
<dbReference type="UniPathway" id="UPA00135">
    <property type="reaction ID" value="UER00197"/>
</dbReference>
<dbReference type="UniPathway" id="UPA00244">
    <property type="reaction ID" value="UER00311"/>
</dbReference>
<dbReference type="Proteomes" id="UP000000593">
    <property type="component" value="Chromosome 1"/>
</dbReference>
<dbReference type="GO" id="GO:0005737">
    <property type="term" value="C:cytoplasm"/>
    <property type="evidence" value="ECO:0007669"/>
    <property type="project" value="UniProtKB-SubCell"/>
</dbReference>
<dbReference type="GO" id="GO:0004648">
    <property type="term" value="F:O-phospho-L-serine:2-oxoglutarate aminotransferase activity"/>
    <property type="evidence" value="ECO:0007669"/>
    <property type="project" value="UniProtKB-UniRule"/>
</dbReference>
<dbReference type="GO" id="GO:0030170">
    <property type="term" value="F:pyridoxal phosphate binding"/>
    <property type="evidence" value="ECO:0007669"/>
    <property type="project" value="UniProtKB-UniRule"/>
</dbReference>
<dbReference type="GO" id="GO:0006564">
    <property type="term" value="P:L-serine biosynthetic process"/>
    <property type="evidence" value="ECO:0007669"/>
    <property type="project" value="UniProtKB-UniRule"/>
</dbReference>
<dbReference type="GO" id="GO:0008615">
    <property type="term" value="P:pyridoxine biosynthetic process"/>
    <property type="evidence" value="ECO:0007669"/>
    <property type="project" value="UniProtKB-UniRule"/>
</dbReference>
<dbReference type="CDD" id="cd00611">
    <property type="entry name" value="PSAT_like"/>
    <property type="match status" value="1"/>
</dbReference>
<dbReference type="FunFam" id="3.40.640.10:FF:000010">
    <property type="entry name" value="Phosphoserine aminotransferase"/>
    <property type="match status" value="1"/>
</dbReference>
<dbReference type="FunFam" id="3.90.1150.10:FF:000006">
    <property type="entry name" value="Phosphoserine aminotransferase"/>
    <property type="match status" value="1"/>
</dbReference>
<dbReference type="Gene3D" id="3.90.1150.10">
    <property type="entry name" value="Aspartate Aminotransferase, domain 1"/>
    <property type="match status" value="1"/>
</dbReference>
<dbReference type="Gene3D" id="3.40.640.10">
    <property type="entry name" value="Type I PLP-dependent aspartate aminotransferase-like (Major domain)"/>
    <property type="match status" value="1"/>
</dbReference>
<dbReference type="HAMAP" id="MF_00160">
    <property type="entry name" value="SerC_aminotrans_5"/>
    <property type="match status" value="1"/>
</dbReference>
<dbReference type="InterPro" id="IPR000192">
    <property type="entry name" value="Aminotrans_V_dom"/>
</dbReference>
<dbReference type="InterPro" id="IPR020578">
    <property type="entry name" value="Aminotrans_V_PyrdxlP_BS"/>
</dbReference>
<dbReference type="InterPro" id="IPR022278">
    <property type="entry name" value="Pser_aminoTfrase"/>
</dbReference>
<dbReference type="InterPro" id="IPR015424">
    <property type="entry name" value="PyrdxlP-dep_Trfase"/>
</dbReference>
<dbReference type="InterPro" id="IPR015421">
    <property type="entry name" value="PyrdxlP-dep_Trfase_major"/>
</dbReference>
<dbReference type="InterPro" id="IPR015422">
    <property type="entry name" value="PyrdxlP-dep_Trfase_small"/>
</dbReference>
<dbReference type="NCBIfam" id="NF003764">
    <property type="entry name" value="PRK05355.1"/>
    <property type="match status" value="1"/>
</dbReference>
<dbReference type="NCBIfam" id="TIGR01364">
    <property type="entry name" value="serC_1"/>
    <property type="match status" value="1"/>
</dbReference>
<dbReference type="PANTHER" id="PTHR43247">
    <property type="entry name" value="PHOSPHOSERINE AMINOTRANSFERASE"/>
    <property type="match status" value="1"/>
</dbReference>
<dbReference type="PANTHER" id="PTHR43247:SF1">
    <property type="entry name" value="PHOSPHOSERINE AMINOTRANSFERASE"/>
    <property type="match status" value="1"/>
</dbReference>
<dbReference type="Pfam" id="PF00266">
    <property type="entry name" value="Aminotran_5"/>
    <property type="match status" value="1"/>
</dbReference>
<dbReference type="PIRSF" id="PIRSF000525">
    <property type="entry name" value="SerC"/>
    <property type="match status" value="1"/>
</dbReference>
<dbReference type="SUPFAM" id="SSF53383">
    <property type="entry name" value="PLP-dependent transferases"/>
    <property type="match status" value="1"/>
</dbReference>
<dbReference type="PROSITE" id="PS00595">
    <property type="entry name" value="AA_TRANSFER_CLASS_5"/>
    <property type="match status" value="1"/>
</dbReference>
<protein>
    <recommendedName>
        <fullName evidence="1">Phosphoserine aminotransferase</fullName>
        <ecNumber evidence="1">2.6.1.52</ecNumber>
    </recommendedName>
    <alternativeName>
        <fullName evidence="1">Phosphohydroxythreonine aminotransferase</fullName>
        <shortName evidence="1">PSAT</shortName>
    </alternativeName>
</protein>
<evidence type="ECO:0000255" key="1">
    <source>
        <dbReference type="HAMAP-Rule" id="MF_00160"/>
    </source>
</evidence>
<proteinExistence type="inferred from homology"/>
<name>SERC_PHOPR</name>
<reference key="1">
    <citation type="journal article" date="2005" name="Science">
        <title>Life at depth: Photobacterium profundum genome sequence and expression analysis.</title>
        <authorList>
            <person name="Vezzi A."/>
            <person name="Campanaro S."/>
            <person name="D'Angelo M."/>
            <person name="Simonato F."/>
            <person name="Vitulo N."/>
            <person name="Lauro F.M."/>
            <person name="Cestaro A."/>
            <person name="Malacrida G."/>
            <person name="Simionati B."/>
            <person name="Cannata N."/>
            <person name="Romualdi C."/>
            <person name="Bartlett D.H."/>
            <person name="Valle G."/>
        </authorList>
    </citation>
    <scope>NUCLEOTIDE SEQUENCE [LARGE SCALE GENOMIC DNA]</scope>
    <source>
        <strain>ATCC BAA-1253 / SS9</strain>
    </source>
</reference>
<feature type="chain" id="PRO_0000150196" description="Phosphoserine aminotransferase">
    <location>
        <begin position="1"/>
        <end position="360"/>
    </location>
</feature>
<feature type="binding site" evidence="1">
    <location>
        <position position="42"/>
    </location>
    <ligand>
        <name>L-glutamate</name>
        <dbReference type="ChEBI" id="CHEBI:29985"/>
    </ligand>
</feature>
<feature type="binding site" evidence="1">
    <location>
        <begin position="76"/>
        <end position="77"/>
    </location>
    <ligand>
        <name>pyridoxal 5'-phosphate</name>
        <dbReference type="ChEBI" id="CHEBI:597326"/>
    </ligand>
</feature>
<feature type="binding site" evidence="1">
    <location>
        <position position="102"/>
    </location>
    <ligand>
        <name>pyridoxal 5'-phosphate</name>
        <dbReference type="ChEBI" id="CHEBI:597326"/>
    </ligand>
</feature>
<feature type="binding site" evidence="1">
    <location>
        <position position="153"/>
    </location>
    <ligand>
        <name>pyridoxal 5'-phosphate</name>
        <dbReference type="ChEBI" id="CHEBI:597326"/>
    </ligand>
</feature>
<feature type="binding site" evidence="1">
    <location>
        <position position="172"/>
    </location>
    <ligand>
        <name>pyridoxal 5'-phosphate</name>
        <dbReference type="ChEBI" id="CHEBI:597326"/>
    </ligand>
</feature>
<feature type="binding site" evidence="1">
    <location>
        <position position="195"/>
    </location>
    <ligand>
        <name>pyridoxal 5'-phosphate</name>
        <dbReference type="ChEBI" id="CHEBI:597326"/>
    </ligand>
</feature>
<feature type="binding site" evidence="1">
    <location>
        <begin position="237"/>
        <end position="238"/>
    </location>
    <ligand>
        <name>pyridoxal 5'-phosphate</name>
        <dbReference type="ChEBI" id="CHEBI:597326"/>
    </ligand>
</feature>
<feature type="modified residue" description="N6-(pyridoxal phosphate)lysine" evidence="1">
    <location>
        <position position="196"/>
    </location>
</feature>